<organism>
    <name type="scientific">Aspergillus clavatus (strain ATCC 1007 / CBS 513.65 / DSM 816 / NCTC 3887 / NRRL 1 / QM 1276 / 107)</name>
    <dbReference type="NCBI Taxonomy" id="344612"/>
    <lineage>
        <taxon>Eukaryota</taxon>
        <taxon>Fungi</taxon>
        <taxon>Dikarya</taxon>
        <taxon>Ascomycota</taxon>
        <taxon>Pezizomycotina</taxon>
        <taxon>Eurotiomycetes</taxon>
        <taxon>Eurotiomycetidae</taxon>
        <taxon>Eurotiales</taxon>
        <taxon>Aspergillaceae</taxon>
        <taxon>Aspergillus</taxon>
        <taxon>Aspergillus subgen. Fumigati</taxon>
    </lineage>
</organism>
<proteinExistence type="inferred from homology"/>
<reference key="1">
    <citation type="journal article" date="2008" name="PLoS Genet.">
        <title>Genomic islands in the pathogenic filamentous fungus Aspergillus fumigatus.</title>
        <authorList>
            <person name="Fedorova N.D."/>
            <person name="Khaldi N."/>
            <person name="Joardar V.S."/>
            <person name="Maiti R."/>
            <person name="Amedeo P."/>
            <person name="Anderson M.J."/>
            <person name="Crabtree J."/>
            <person name="Silva J.C."/>
            <person name="Badger J.H."/>
            <person name="Albarraq A."/>
            <person name="Angiuoli S."/>
            <person name="Bussey H."/>
            <person name="Bowyer P."/>
            <person name="Cotty P.J."/>
            <person name="Dyer P.S."/>
            <person name="Egan A."/>
            <person name="Galens K."/>
            <person name="Fraser-Liggett C.M."/>
            <person name="Haas B.J."/>
            <person name="Inman J.M."/>
            <person name="Kent R."/>
            <person name="Lemieux S."/>
            <person name="Malavazi I."/>
            <person name="Orvis J."/>
            <person name="Roemer T."/>
            <person name="Ronning C.M."/>
            <person name="Sundaram J.P."/>
            <person name="Sutton G."/>
            <person name="Turner G."/>
            <person name="Venter J.C."/>
            <person name="White O.R."/>
            <person name="Whitty B.R."/>
            <person name="Youngman P."/>
            <person name="Wolfe K.H."/>
            <person name="Goldman G.H."/>
            <person name="Wortman J.R."/>
            <person name="Jiang B."/>
            <person name="Denning D.W."/>
            <person name="Nierman W.C."/>
        </authorList>
    </citation>
    <scope>NUCLEOTIDE SEQUENCE [LARGE SCALE GENOMIC DNA]</scope>
    <source>
        <strain>ATCC 1007 / CBS 513.65 / DSM 816 / NCTC 3887 / NRRL 1 / QM 1276 / 107</strain>
    </source>
</reference>
<comment type="function">
    <text evidence="1">ATP-binding RNA helicase involved in ribosome assembly.</text>
</comment>
<comment type="catalytic activity">
    <reaction>
        <text>ATP + H2O = ADP + phosphate + H(+)</text>
        <dbReference type="Rhea" id="RHEA:13065"/>
        <dbReference type="ChEBI" id="CHEBI:15377"/>
        <dbReference type="ChEBI" id="CHEBI:15378"/>
        <dbReference type="ChEBI" id="CHEBI:30616"/>
        <dbReference type="ChEBI" id="CHEBI:43474"/>
        <dbReference type="ChEBI" id="CHEBI:456216"/>
        <dbReference type="EC" id="3.6.4.13"/>
    </reaction>
</comment>
<comment type="subunit">
    <text evidence="1">Associates with pre-ribosomal particles.</text>
</comment>
<comment type="subcellular location">
    <subcellularLocation>
        <location evidence="1">Nucleus</location>
        <location evidence="1">Nucleolus</location>
    </subcellularLocation>
</comment>
<comment type="domain">
    <text>The Q motif is unique to and characteristic of the DEAD box family of RNA helicases and controls ATP binding and hydrolysis.</text>
</comment>
<comment type="similarity">
    <text evidence="5">Belongs to the DEAD box helicase family. DDX27/DRS1 subfamily.</text>
</comment>
<dbReference type="EC" id="3.6.4.13"/>
<dbReference type="EMBL" id="DS027059">
    <property type="protein sequence ID" value="EAW07329.1"/>
    <property type="molecule type" value="Genomic_DNA"/>
</dbReference>
<dbReference type="RefSeq" id="XP_001268755.1">
    <property type="nucleotide sequence ID" value="XM_001268754.1"/>
</dbReference>
<dbReference type="SMR" id="A1CNV8"/>
<dbReference type="STRING" id="344612.A1CNV8"/>
<dbReference type="EnsemblFungi" id="EAW07329">
    <property type="protein sequence ID" value="EAW07329"/>
    <property type="gene ID" value="ACLA_020360"/>
</dbReference>
<dbReference type="GeneID" id="4701381"/>
<dbReference type="KEGG" id="act:ACLA_020360"/>
<dbReference type="VEuPathDB" id="FungiDB:ACLA_020360"/>
<dbReference type="eggNOG" id="KOG0338">
    <property type="taxonomic scope" value="Eukaryota"/>
</dbReference>
<dbReference type="HOGENOM" id="CLU_003041_3_1_1"/>
<dbReference type="OMA" id="MIDPPKQ"/>
<dbReference type="OrthoDB" id="10259843at2759"/>
<dbReference type="Proteomes" id="UP000006701">
    <property type="component" value="Unassembled WGS sequence"/>
</dbReference>
<dbReference type="GO" id="GO:0005829">
    <property type="term" value="C:cytosol"/>
    <property type="evidence" value="ECO:0007669"/>
    <property type="project" value="TreeGrafter"/>
</dbReference>
<dbReference type="GO" id="GO:0005730">
    <property type="term" value="C:nucleolus"/>
    <property type="evidence" value="ECO:0007669"/>
    <property type="project" value="UniProtKB-SubCell"/>
</dbReference>
<dbReference type="GO" id="GO:0030687">
    <property type="term" value="C:preribosome, large subunit precursor"/>
    <property type="evidence" value="ECO:0007669"/>
    <property type="project" value="EnsemblFungi"/>
</dbReference>
<dbReference type="GO" id="GO:0005524">
    <property type="term" value="F:ATP binding"/>
    <property type="evidence" value="ECO:0007669"/>
    <property type="project" value="UniProtKB-KW"/>
</dbReference>
<dbReference type="GO" id="GO:0016887">
    <property type="term" value="F:ATP hydrolysis activity"/>
    <property type="evidence" value="ECO:0007669"/>
    <property type="project" value="RHEA"/>
</dbReference>
<dbReference type="GO" id="GO:0003723">
    <property type="term" value="F:RNA binding"/>
    <property type="evidence" value="ECO:0007669"/>
    <property type="project" value="UniProtKB-KW"/>
</dbReference>
<dbReference type="GO" id="GO:0003724">
    <property type="term" value="F:RNA helicase activity"/>
    <property type="evidence" value="ECO:0007669"/>
    <property type="project" value="UniProtKB-EC"/>
</dbReference>
<dbReference type="GO" id="GO:0000027">
    <property type="term" value="P:ribosomal large subunit assembly"/>
    <property type="evidence" value="ECO:0007669"/>
    <property type="project" value="EnsemblFungi"/>
</dbReference>
<dbReference type="GO" id="GO:0006364">
    <property type="term" value="P:rRNA processing"/>
    <property type="evidence" value="ECO:0007669"/>
    <property type="project" value="EnsemblFungi"/>
</dbReference>
<dbReference type="CDD" id="cd17947">
    <property type="entry name" value="DEADc_DDX27"/>
    <property type="match status" value="1"/>
</dbReference>
<dbReference type="CDD" id="cd18787">
    <property type="entry name" value="SF2_C_DEAD"/>
    <property type="match status" value="1"/>
</dbReference>
<dbReference type="Gene3D" id="3.40.50.300">
    <property type="entry name" value="P-loop containing nucleotide triphosphate hydrolases"/>
    <property type="match status" value="2"/>
</dbReference>
<dbReference type="InterPro" id="IPR011545">
    <property type="entry name" value="DEAD/DEAH_box_helicase_dom"/>
</dbReference>
<dbReference type="InterPro" id="IPR050079">
    <property type="entry name" value="DEAD_box_RNA_helicase"/>
</dbReference>
<dbReference type="InterPro" id="IPR014001">
    <property type="entry name" value="Helicase_ATP-bd"/>
</dbReference>
<dbReference type="InterPro" id="IPR001650">
    <property type="entry name" value="Helicase_C-like"/>
</dbReference>
<dbReference type="InterPro" id="IPR027417">
    <property type="entry name" value="P-loop_NTPase"/>
</dbReference>
<dbReference type="InterPro" id="IPR000629">
    <property type="entry name" value="RNA-helicase_DEAD-box_CS"/>
</dbReference>
<dbReference type="InterPro" id="IPR014014">
    <property type="entry name" value="RNA_helicase_DEAD_Q_motif"/>
</dbReference>
<dbReference type="PANTHER" id="PTHR47959:SF1">
    <property type="entry name" value="ATP-DEPENDENT RNA HELICASE DBPA"/>
    <property type="match status" value="1"/>
</dbReference>
<dbReference type="PANTHER" id="PTHR47959">
    <property type="entry name" value="ATP-DEPENDENT RNA HELICASE RHLE-RELATED"/>
    <property type="match status" value="1"/>
</dbReference>
<dbReference type="Pfam" id="PF00270">
    <property type="entry name" value="DEAD"/>
    <property type="match status" value="1"/>
</dbReference>
<dbReference type="Pfam" id="PF00271">
    <property type="entry name" value="Helicase_C"/>
    <property type="match status" value="1"/>
</dbReference>
<dbReference type="SMART" id="SM00487">
    <property type="entry name" value="DEXDc"/>
    <property type="match status" value="1"/>
</dbReference>
<dbReference type="SMART" id="SM00490">
    <property type="entry name" value="HELICc"/>
    <property type="match status" value="1"/>
</dbReference>
<dbReference type="SUPFAM" id="SSF52540">
    <property type="entry name" value="P-loop containing nucleoside triphosphate hydrolases"/>
    <property type="match status" value="2"/>
</dbReference>
<dbReference type="PROSITE" id="PS00039">
    <property type="entry name" value="DEAD_ATP_HELICASE"/>
    <property type="match status" value="1"/>
</dbReference>
<dbReference type="PROSITE" id="PS51192">
    <property type="entry name" value="HELICASE_ATP_BIND_1"/>
    <property type="match status" value="1"/>
</dbReference>
<dbReference type="PROSITE" id="PS51194">
    <property type="entry name" value="HELICASE_CTER"/>
    <property type="match status" value="1"/>
</dbReference>
<dbReference type="PROSITE" id="PS51195">
    <property type="entry name" value="Q_MOTIF"/>
    <property type="match status" value="1"/>
</dbReference>
<sequence>MAPSKKRTSVPDDDFVFTLSDDENDVLENGADEGDEQADEETASGSKKRKRETAEAPKGKNKKQKQLKQSKKGKGAAVAGSDGEEEEEGDEEEAADAGEDDGALDSEFEFDVGGHATAGVIEGFDGWETQNGDASANKNGDKKAVDIDDIISRRKEQKDAELKRKLKKEEKRKRMEESEDEAEAEDVESDGDMSVDFQDDELLAADGFGMGADGEDESGESDAGDGAGSDEENDSDDNGDDEGDADDDDAASDNDSVATPVGHPDDEVASDDESGAESEVDAEEAEKRKAFFAPEEKTTEEPTSKRSFQDFNLSRPILRGLASVNFTTPTPIQQKTIPVALLGKDIVGSAVTGSGKTAAFVVPILERLLFRPRKVPTSRVAILMPTRELAVQCYNVATKLATHTDVTFCQLVGGFSLREQENILKKRPDVIIATPGRFIDHMRNSPSFTVDTLEILVLDEADRMLEDGFADELNEILTTIPKSRQTMLFSATMTDSVDKLIRVGLNRPVRLMVDSKKNTSMNLTQEFVRLRPGREGKRLGYLLYLCSEIFTGRVIVFFRQKKEAHRVRIVFGLLGLKAAELHGSMSQEQRIKSVESFREGKVAFLLATDLASRGLDIKGVETVINYEAPQSHEIYLHRVGRTARAGRSGRACTIAADPDRKVVKAAVRAGKAQGAKIASRVVEPAVADQWAAKVEALEEEIEEVLKEEKLEKHMAQAEMQVTKGENLMKHGAEIMSRPKRTWFETERDKRASRKLGATELNGPSKKDKVKLSNKDKKRLDDSRQRHEGNQGWKKGKTEREAPKQAKTKGGKNQSDKKNKNKMKGKK</sequence>
<feature type="chain" id="PRO_0000282489" description="ATP-dependent RNA helicase drs1">
    <location>
        <begin position="1"/>
        <end position="826"/>
    </location>
</feature>
<feature type="domain" description="Helicase ATP-binding" evidence="2">
    <location>
        <begin position="337"/>
        <end position="511"/>
    </location>
</feature>
<feature type="domain" description="Helicase C-terminal" evidence="3">
    <location>
        <begin position="538"/>
        <end position="690"/>
    </location>
</feature>
<feature type="region of interest" description="Disordered" evidence="4">
    <location>
        <begin position="1"/>
        <end position="308"/>
    </location>
</feature>
<feature type="region of interest" description="Disordered" evidence="4">
    <location>
        <begin position="731"/>
        <end position="826"/>
    </location>
</feature>
<feature type="short sequence motif" description="Q motif">
    <location>
        <begin position="306"/>
        <end position="334"/>
    </location>
</feature>
<feature type="short sequence motif" description="DEAD box">
    <location>
        <begin position="459"/>
        <end position="462"/>
    </location>
</feature>
<feature type="compositionally biased region" description="Acidic residues" evidence="4">
    <location>
        <begin position="11"/>
        <end position="42"/>
    </location>
</feature>
<feature type="compositionally biased region" description="Basic residues" evidence="4">
    <location>
        <begin position="59"/>
        <end position="74"/>
    </location>
</feature>
<feature type="compositionally biased region" description="Acidic residues" evidence="4">
    <location>
        <begin position="82"/>
        <end position="110"/>
    </location>
</feature>
<feature type="compositionally biased region" description="Polar residues" evidence="4">
    <location>
        <begin position="128"/>
        <end position="138"/>
    </location>
</feature>
<feature type="compositionally biased region" description="Basic and acidic residues" evidence="4">
    <location>
        <begin position="139"/>
        <end position="176"/>
    </location>
</feature>
<feature type="compositionally biased region" description="Acidic residues" evidence="4">
    <location>
        <begin position="177"/>
        <end position="203"/>
    </location>
</feature>
<feature type="compositionally biased region" description="Acidic residues" evidence="4">
    <location>
        <begin position="213"/>
        <end position="252"/>
    </location>
</feature>
<feature type="compositionally biased region" description="Acidic residues" evidence="4">
    <location>
        <begin position="267"/>
        <end position="284"/>
    </location>
</feature>
<feature type="compositionally biased region" description="Basic and acidic residues" evidence="4">
    <location>
        <begin position="285"/>
        <end position="308"/>
    </location>
</feature>
<feature type="compositionally biased region" description="Basic and acidic residues" evidence="4">
    <location>
        <begin position="764"/>
        <end position="788"/>
    </location>
</feature>
<feature type="binding site" evidence="2">
    <location>
        <begin position="350"/>
        <end position="357"/>
    </location>
    <ligand>
        <name>ATP</name>
        <dbReference type="ChEBI" id="CHEBI:30616"/>
    </ligand>
</feature>
<keyword id="KW-0067">ATP-binding</keyword>
<keyword id="KW-0347">Helicase</keyword>
<keyword id="KW-0378">Hydrolase</keyword>
<keyword id="KW-0547">Nucleotide-binding</keyword>
<keyword id="KW-0539">Nucleus</keyword>
<keyword id="KW-1185">Reference proteome</keyword>
<keyword id="KW-0690">Ribosome biogenesis</keyword>
<keyword id="KW-0694">RNA-binding</keyword>
<name>DRS1_ASPCL</name>
<gene>
    <name type="primary">drs1</name>
    <name type="ORF">ACLA_020360</name>
</gene>
<protein>
    <recommendedName>
        <fullName>ATP-dependent RNA helicase drs1</fullName>
        <ecNumber>3.6.4.13</ecNumber>
    </recommendedName>
</protein>
<accession>A1CNV8</accession>
<evidence type="ECO:0000250" key="1"/>
<evidence type="ECO:0000255" key="2">
    <source>
        <dbReference type="PROSITE-ProRule" id="PRU00541"/>
    </source>
</evidence>
<evidence type="ECO:0000255" key="3">
    <source>
        <dbReference type="PROSITE-ProRule" id="PRU00542"/>
    </source>
</evidence>
<evidence type="ECO:0000256" key="4">
    <source>
        <dbReference type="SAM" id="MobiDB-lite"/>
    </source>
</evidence>
<evidence type="ECO:0000305" key="5"/>